<reference key="1">
    <citation type="journal article" date="2008" name="J. Bacteriol.">
        <title>Comparative genome sequence analysis of multidrug-resistant Acinetobacter baumannii.</title>
        <authorList>
            <person name="Adams M.D."/>
            <person name="Goglin K."/>
            <person name="Molyneaux N."/>
            <person name="Hujer K.M."/>
            <person name="Lavender H."/>
            <person name="Jamison J.J."/>
            <person name="MacDonald I.J."/>
            <person name="Martin K.M."/>
            <person name="Russo T."/>
            <person name="Campagnari A.A."/>
            <person name="Hujer A.M."/>
            <person name="Bonomo R.A."/>
            <person name="Gill S.R."/>
        </authorList>
    </citation>
    <scope>NUCLEOTIDE SEQUENCE [LARGE SCALE GENOMIC DNA]</scope>
    <source>
        <strain>AB0057</strain>
    </source>
</reference>
<keyword id="KW-0002">3D-structure</keyword>
<keyword id="KW-0687">Ribonucleoprotein</keyword>
<keyword id="KW-0689">Ribosomal protein</keyword>
<keyword id="KW-0694">RNA-binding</keyword>
<keyword id="KW-0699">rRNA-binding</keyword>
<gene>
    <name evidence="1" type="primary">rplX</name>
    <name type="ordered locus">AB57_3519</name>
</gene>
<protein>
    <recommendedName>
        <fullName evidence="1">Large ribosomal subunit protein uL24</fullName>
    </recommendedName>
    <alternativeName>
        <fullName evidence="2">50S ribosomal protein L24</fullName>
    </alternativeName>
</protein>
<organism>
    <name type="scientific">Acinetobacter baumannii (strain AB0057)</name>
    <dbReference type="NCBI Taxonomy" id="480119"/>
    <lineage>
        <taxon>Bacteria</taxon>
        <taxon>Pseudomonadati</taxon>
        <taxon>Pseudomonadota</taxon>
        <taxon>Gammaproteobacteria</taxon>
        <taxon>Moraxellales</taxon>
        <taxon>Moraxellaceae</taxon>
        <taxon>Acinetobacter</taxon>
        <taxon>Acinetobacter calcoaceticus/baumannii complex</taxon>
    </lineage>
</organism>
<dbReference type="EMBL" id="CP001182">
    <property type="protein sequence ID" value="ACJ42886.1"/>
    <property type="molecule type" value="Genomic_DNA"/>
</dbReference>
<dbReference type="RefSeq" id="WP_001062685.1">
    <property type="nucleotide sequence ID" value="NC_011586.2"/>
</dbReference>
<dbReference type="PDB" id="6V39">
    <property type="method" value="EM"/>
    <property type="resolution" value="3.04 A"/>
    <property type="chains" value="T=1-105"/>
</dbReference>
<dbReference type="PDB" id="6V3A">
    <property type="method" value="EM"/>
    <property type="resolution" value="2.82 A"/>
    <property type="chains" value="T=1-105"/>
</dbReference>
<dbReference type="PDB" id="6V3B">
    <property type="method" value="EM"/>
    <property type="resolution" value="2.91 A"/>
    <property type="chains" value="T=1-105"/>
</dbReference>
<dbReference type="PDB" id="6V3D">
    <property type="method" value="EM"/>
    <property type="resolution" value="2.95 A"/>
    <property type="chains" value="T=1-105"/>
</dbReference>
<dbReference type="PDB" id="7M4V">
    <property type="method" value="EM"/>
    <property type="resolution" value="2.54 A"/>
    <property type="chains" value="T=1-105"/>
</dbReference>
<dbReference type="PDB" id="7M4W">
    <property type="method" value="EM"/>
    <property type="resolution" value="2.55 A"/>
    <property type="chains" value="T=1-105"/>
</dbReference>
<dbReference type="PDB" id="7M4X">
    <property type="method" value="EM"/>
    <property type="resolution" value="2.66 A"/>
    <property type="chains" value="T=1-105"/>
</dbReference>
<dbReference type="PDB" id="7M4Y">
    <property type="method" value="EM"/>
    <property type="resolution" value="2.50 A"/>
    <property type="chains" value="T=1-105"/>
</dbReference>
<dbReference type="PDB" id="7M4Z">
    <property type="method" value="EM"/>
    <property type="resolution" value="2.92 A"/>
    <property type="chains" value="T=1-105"/>
</dbReference>
<dbReference type="PDB" id="7RYF">
    <property type="method" value="EM"/>
    <property type="resolution" value="2.65 A"/>
    <property type="chains" value="T=1-105"/>
</dbReference>
<dbReference type="PDB" id="7RYG">
    <property type="method" value="EM"/>
    <property type="resolution" value="2.38 A"/>
    <property type="chains" value="T=1-105"/>
</dbReference>
<dbReference type="PDB" id="7RYH">
    <property type="method" value="EM"/>
    <property type="resolution" value="2.43 A"/>
    <property type="chains" value="T=1-105"/>
</dbReference>
<dbReference type="PDB" id="7UVV">
    <property type="method" value="EM"/>
    <property type="resolution" value="2.50 A"/>
    <property type="chains" value="T=1-105"/>
</dbReference>
<dbReference type="PDB" id="7UVW">
    <property type="method" value="EM"/>
    <property type="resolution" value="2.37 A"/>
    <property type="chains" value="T=1-105"/>
</dbReference>
<dbReference type="PDB" id="7UVX">
    <property type="method" value="EM"/>
    <property type="resolution" value="2.35 A"/>
    <property type="chains" value="T=1-105"/>
</dbReference>
<dbReference type="PDB" id="7UVY">
    <property type="method" value="EM"/>
    <property type="resolution" value="2.39 A"/>
    <property type="chains" value="T=1-105"/>
</dbReference>
<dbReference type="PDB" id="7UVZ">
    <property type="method" value="EM"/>
    <property type="resolution" value="2.21 A"/>
    <property type="chains" value="T=1-105"/>
</dbReference>
<dbReference type="PDB" id="7UW1">
    <property type="method" value="EM"/>
    <property type="resolution" value="2.21 A"/>
    <property type="chains" value="T=1-105"/>
</dbReference>
<dbReference type="PDBsum" id="6V39"/>
<dbReference type="PDBsum" id="6V3A"/>
<dbReference type="PDBsum" id="6V3B"/>
<dbReference type="PDBsum" id="6V3D"/>
<dbReference type="PDBsum" id="7M4V"/>
<dbReference type="PDBsum" id="7M4W"/>
<dbReference type="PDBsum" id="7M4X"/>
<dbReference type="PDBsum" id="7M4Y"/>
<dbReference type="PDBsum" id="7M4Z"/>
<dbReference type="PDBsum" id="7RYF"/>
<dbReference type="PDBsum" id="7RYG"/>
<dbReference type="PDBsum" id="7RYH"/>
<dbReference type="PDBsum" id="7UVV"/>
<dbReference type="PDBsum" id="7UVW"/>
<dbReference type="PDBsum" id="7UVX"/>
<dbReference type="PDBsum" id="7UVY"/>
<dbReference type="PDBsum" id="7UVZ"/>
<dbReference type="PDBsum" id="7UW1"/>
<dbReference type="EMDB" id="EMD-21030"/>
<dbReference type="EMDB" id="EMD-21031"/>
<dbReference type="EMDB" id="EMD-21032"/>
<dbReference type="EMDB" id="EMD-21033"/>
<dbReference type="EMDB" id="EMD-23667"/>
<dbReference type="EMDB" id="EMD-23668"/>
<dbReference type="EMDB" id="EMD-23669"/>
<dbReference type="EMDB" id="EMD-23670"/>
<dbReference type="EMDB" id="EMD-23671"/>
<dbReference type="EMDB" id="EMD-24738"/>
<dbReference type="EMDB" id="EMD-24739"/>
<dbReference type="EMDB" id="EMD-24740"/>
<dbReference type="EMDB" id="EMD-26817"/>
<dbReference type="EMDB" id="EMD-26818"/>
<dbReference type="EMDB" id="EMD-26819"/>
<dbReference type="EMDB" id="EMD-26820"/>
<dbReference type="EMDB" id="EMD-26821"/>
<dbReference type="EMDB" id="EMD-26822"/>
<dbReference type="SMR" id="B7IA28"/>
<dbReference type="IntAct" id="B7IA28">
    <property type="interactions" value="2"/>
</dbReference>
<dbReference type="GeneID" id="92895306"/>
<dbReference type="KEGG" id="abn:AB57_3519"/>
<dbReference type="HOGENOM" id="CLU_093315_2_2_6"/>
<dbReference type="Proteomes" id="UP000007094">
    <property type="component" value="Chromosome"/>
</dbReference>
<dbReference type="GO" id="GO:1990904">
    <property type="term" value="C:ribonucleoprotein complex"/>
    <property type="evidence" value="ECO:0007669"/>
    <property type="project" value="UniProtKB-KW"/>
</dbReference>
<dbReference type="GO" id="GO:0005840">
    <property type="term" value="C:ribosome"/>
    <property type="evidence" value="ECO:0007669"/>
    <property type="project" value="UniProtKB-KW"/>
</dbReference>
<dbReference type="GO" id="GO:0019843">
    <property type="term" value="F:rRNA binding"/>
    <property type="evidence" value="ECO:0007669"/>
    <property type="project" value="UniProtKB-UniRule"/>
</dbReference>
<dbReference type="GO" id="GO:0003735">
    <property type="term" value="F:structural constituent of ribosome"/>
    <property type="evidence" value="ECO:0007669"/>
    <property type="project" value="InterPro"/>
</dbReference>
<dbReference type="GO" id="GO:0006412">
    <property type="term" value="P:translation"/>
    <property type="evidence" value="ECO:0007669"/>
    <property type="project" value="UniProtKB-UniRule"/>
</dbReference>
<dbReference type="CDD" id="cd06089">
    <property type="entry name" value="KOW_RPL26"/>
    <property type="match status" value="1"/>
</dbReference>
<dbReference type="FunFam" id="2.30.30.30:FF:000004">
    <property type="entry name" value="50S ribosomal protein L24"/>
    <property type="match status" value="1"/>
</dbReference>
<dbReference type="Gene3D" id="2.30.30.30">
    <property type="match status" value="1"/>
</dbReference>
<dbReference type="HAMAP" id="MF_01326_B">
    <property type="entry name" value="Ribosomal_uL24_B"/>
    <property type="match status" value="1"/>
</dbReference>
<dbReference type="InterPro" id="IPR005824">
    <property type="entry name" value="KOW"/>
</dbReference>
<dbReference type="InterPro" id="IPR014722">
    <property type="entry name" value="Rib_uL2_dom2"/>
</dbReference>
<dbReference type="InterPro" id="IPR003256">
    <property type="entry name" value="Ribosomal_uL24"/>
</dbReference>
<dbReference type="InterPro" id="IPR005825">
    <property type="entry name" value="Ribosomal_uL24_CS"/>
</dbReference>
<dbReference type="InterPro" id="IPR041988">
    <property type="entry name" value="Ribosomal_uL24_KOW"/>
</dbReference>
<dbReference type="InterPro" id="IPR008991">
    <property type="entry name" value="Translation_prot_SH3-like_sf"/>
</dbReference>
<dbReference type="NCBIfam" id="TIGR01079">
    <property type="entry name" value="rplX_bact"/>
    <property type="match status" value="1"/>
</dbReference>
<dbReference type="PANTHER" id="PTHR12903">
    <property type="entry name" value="MITOCHONDRIAL RIBOSOMAL PROTEIN L24"/>
    <property type="match status" value="1"/>
</dbReference>
<dbReference type="Pfam" id="PF00467">
    <property type="entry name" value="KOW"/>
    <property type="match status" value="1"/>
</dbReference>
<dbReference type="Pfam" id="PF17136">
    <property type="entry name" value="ribosomal_L24"/>
    <property type="match status" value="1"/>
</dbReference>
<dbReference type="SMART" id="SM00739">
    <property type="entry name" value="KOW"/>
    <property type="match status" value="1"/>
</dbReference>
<dbReference type="SUPFAM" id="SSF50104">
    <property type="entry name" value="Translation proteins SH3-like domain"/>
    <property type="match status" value="1"/>
</dbReference>
<dbReference type="PROSITE" id="PS01108">
    <property type="entry name" value="RIBOSOMAL_L24"/>
    <property type="match status" value="1"/>
</dbReference>
<feature type="chain" id="PRO_1000141949" description="Large ribosomal subunit protein uL24">
    <location>
        <begin position="1"/>
        <end position="105"/>
    </location>
</feature>
<feature type="strand" evidence="3">
    <location>
        <begin position="9"/>
        <end position="12"/>
    </location>
</feature>
<feature type="turn" evidence="3">
    <location>
        <begin position="16"/>
        <end position="19"/>
    </location>
</feature>
<feature type="strand" evidence="3">
    <location>
        <begin position="21"/>
        <end position="28"/>
    </location>
</feature>
<feature type="strand" evidence="3">
    <location>
        <begin position="31"/>
        <end position="34"/>
    </location>
</feature>
<feature type="strand" evidence="3">
    <location>
        <begin position="38"/>
        <end position="43"/>
    </location>
</feature>
<feature type="turn" evidence="3">
    <location>
        <begin position="48"/>
        <end position="50"/>
    </location>
</feature>
<feature type="strand" evidence="3">
    <location>
        <begin position="56"/>
        <end position="60"/>
    </location>
</feature>
<feature type="helix" evidence="3">
    <location>
        <begin position="65"/>
        <end position="67"/>
    </location>
</feature>
<feature type="strand" evidence="3">
    <location>
        <begin position="68"/>
        <end position="71"/>
    </location>
</feature>
<feature type="turn" evidence="3">
    <location>
        <begin position="73"/>
        <end position="75"/>
    </location>
</feature>
<feature type="strand" evidence="3">
    <location>
        <begin position="77"/>
        <end position="79"/>
    </location>
</feature>
<feature type="strand" evidence="3">
    <location>
        <begin position="81"/>
        <end position="86"/>
    </location>
</feature>
<feature type="strand" evidence="3">
    <location>
        <begin position="89"/>
        <end position="94"/>
    </location>
</feature>
<feature type="turn" evidence="3">
    <location>
        <begin position="95"/>
        <end position="97"/>
    </location>
</feature>
<proteinExistence type="evidence at protein level"/>
<comment type="function">
    <text evidence="1">One of two assembly initiator proteins, it binds directly to the 5'-end of the 23S rRNA, where it nucleates assembly of the 50S subunit.</text>
</comment>
<comment type="function">
    <text evidence="1">One of the proteins that surrounds the polypeptide exit tunnel on the outside of the subunit.</text>
</comment>
<comment type="subunit">
    <text evidence="1">Part of the 50S ribosomal subunit.</text>
</comment>
<comment type="similarity">
    <text evidence="1">Belongs to the universal ribosomal protein uL24 family.</text>
</comment>
<name>RL24_ACIB5</name>
<evidence type="ECO:0000255" key="1">
    <source>
        <dbReference type="HAMAP-Rule" id="MF_01326"/>
    </source>
</evidence>
<evidence type="ECO:0000305" key="2"/>
<evidence type="ECO:0007829" key="3">
    <source>
        <dbReference type="PDB" id="7M4V"/>
    </source>
</evidence>
<accession>B7IA28</accession>
<sequence length="105" mass="11168">MAKIKKGDQVIVIAGKEKGKQGTVLSVSEDRVKVEGLNLVKKHQKPNRVTGAEGGIVTQEASLHISNVAILNATTQKADRVGYQVIDGVKTRVYKSTGESVAVAK</sequence>